<organism>
    <name type="scientific">Salinibacter ruber (strain DSM 13855 / M31)</name>
    <dbReference type="NCBI Taxonomy" id="309807"/>
    <lineage>
        <taxon>Bacteria</taxon>
        <taxon>Pseudomonadati</taxon>
        <taxon>Rhodothermota</taxon>
        <taxon>Rhodothermia</taxon>
        <taxon>Rhodothermales</taxon>
        <taxon>Salinibacteraceae</taxon>
        <taxon>Salinibacter</taxon>
    </lineage>
</organism>
<proteinExistence type="inferred from homology"/>
<gene>
    <name evidence="1" type="primary">rplQ</name>
    <name type="ordered locus">SRU_1061</name>
</gene>
<evidence type="ECO:0000255" key="1">
    <source>
        <dbReference type="HAMAP-Rule" id="MF_01368"/>
    </source>
</evidence>
<evidence type="ECO:0000256" key="2">
    <source>
        <dbReference type="SAM" id="MobiDB-lite"/>
    </source>
</evidence>
<evidence type="ECO:0000305" key="3"/>
<reference key="1">
    <citation type="journal article" date="2005" name="Proc. Natl. Acad. Sci. U.S.A.">
        <title>The genome of Salinibacter ruber: convergence and gene exchange among hyperhalophilic bacteria and archaea.</title>
        <authorList>
            <person name="Mongodin E.F."/>
            <person name="Nelson K.E."/>
            <person name="Daugherty S."/>
            <person name="DeBoy R.T."/>
            <person name="Wister J."/>
            <person name="Khouri H."/>
            <person name="Weidman J."/>
            <person name="Walsh D.A."/>
            <person name="Papke R.T."/>
            <person name="Sanchez Perez G."/>
            <person name="Sharma A.K."/>
            <person name="Nesbo C.L."/>
            <person name="MacLeod D."/>
            <person name="Bapteste E."/>
            <person name="Doolittle W.F."/>
            <person name="Charlebois R.L."/>
            <person name="Legault B."/>
            <person name="Rodriguez-Valera F."/>
        </authorList>
    </citation>
    <scope>NUCLEOTIDE SEQUENCE [LARGE SCALE GENOMIC DNA]</scope>
    <source>
        <strain>DSM 13855 / CECT 5946 / M31</strain>
    </source>
</reference>
<feature type="chain" id="PRO_0000267936" description="Large ribosomal subunit protein bL17">
    <location>
        <begin position="1"/>
        <end position="197"/>
    </location>
</feature>
<feature type="region of interest" description="Disordered" evidence="2">
    <location>
        <begin position="120"/>
        <end position="197"/>
    </location>
</feature>
<feature type="compositionally biased region" description="Gly residues" evidence="2">
    <location>
        <begin position="127"/>
        <end position="136"/>
    </location>
</feature>
<feature type="compositionally biased region" description="Acidic residues" evidence="2">
    <location>
        <begin position="159"/>
        <end position="197"/>
    </location>
</feature>
<accession>Q2S3N8</accession>
<keyword id="KW-1185">Reference proteome</keyword>
<keyword id="KW-0687">Ribonucleoprotein</keyword>
<keyword id="KW-0689">Ribosomal protein</keyword>
<name>RL17_SALRD</name>
<comment type="subunit">
    <text evidence="1">Part of the 50S ribosomal subunit. Contacts protein L32.</text>
</comment>
<comment type="similarity">
    <text evidence="1">Belongs to the bacterial ribosomal protein bL17 family.</text>
</comment>
<dbReference type="EMBL" id="CP000159">
    <property type="protein sequence ID" value="ABC45586.1"/>
    <property type="molecule type" value="Genomic_DNA"/>
</dbReference>
<dbReference type="RefSeq" id="WP_011403821.1">
    <property type="nucleotide sequence ID" value="NC_007677.1"/>
</dbReference>
<dbReference type="RefSeq" id="YP_445193.1">
    <property type="nucleotide sequence ID" value="NC_007677.1"/>
</dbReference>
<dbReference type="SMR" id="Q2S3N8"/>
<dbReference type="STRING" id="309807.SRU_1061"/>
<dbReference type="EnsemblBacteria" id="ABC45586">
    <property type="protein sequence ID" value="ABC45586"/>
    <property type="gene ID" value="SRU_1061"/>
</dbReference>
<dbReference type="GeneID" id="83727990"/>
<dbReference type="KEGG" id="sru:SRU_1061"/>
<dbReference type="PATRIC" id="fig|309807.25.peg.1099"/>
<dbReference type="eggNOG" id="COG0203">
    <property type="taxonomic scope" value="Bacteria"/>
</dbReference>
<dbReference type="HOGENOM" id="CLU_074407_0_1_10"/>
<dbReference type="OrthoDB" id="9809073at2"/>
<dbReference type="Proteomes" id="UP000008674">
    <property type="component" value="Chromosome"/>
</dbReference>
<dbReference type="GO" id="GO:0022625">
    <property type="term" value="C:cytosolic large ribosomal subunit"/>
    <property type="evidence" value="ECO:0007669"/>
    <property type="project" value="TreeGrafter"/>
</dbReference>
<dbReference type="GO" id="GO:0003735">
    <property type="term" value="F:structural constituent of ribosome"/>
    <property type="evidence" value="ECO:0007669"/>
    <property type="project" value="InterPro"/>
</dbReference>
<dbReference type="GO" id="GO:0006412">
    <property type="term" value="P:translation"/>
    <property type="evidence" value="ECO:0007669"/>
    <property type="project" value="UniProtKB-UniRule"/>
</dbReference>
<dbReference type="Gene3D" id="3.90.1030.10">
    <property type="entry name" value="Ribosomal protein L17"/>
    <property type="match status" value="1"/>
</dbReference>
<dbReference type="HAMAP" id="MF_01368">
    <property type="entry name" value="Ribosomal_bL17"/>
    <property type="match status" value="1"/>
</dbReference>
<dbReference type="InterPro" id="IPR000456">
    <property type="entry name" value="Ribosomal_bL17"/>
</dbReference>
<dbReference type="InterPro" id="IPR047859">
    <property type="entry name" value="Ribosomal_bL17_CS"/>
</dbReference>
<dbReference type="InterPro" id="IPR036373">
    <property type="entry name" value="Ribosomal_bL17_sf"/>
</dbReference>
<dbReference type="NCBIfam" id="TIGR00059">
    <property type="entry name" value="L17"/>
    <property type="match status" value="1"/>
</dbReference>
<dbReference type="PANTHER" id="PTHR14413:SF16">
    <property type="entry name" value="LARGE RIBOSOMAL SUBUNIT PROTEIN BL17M"/>
    <property type="match status" value="1"/>
</dbReference>
<dbReference type="PANTHER" id="PTHR14413">
    <property type="entry name" value="RIBOSOMAL PROTEIN L17"/>
    <property type="match status" value="1"/>
</dbReference>
<dbReference type="Pfam" id="PF01196">
    <property type="entry name" value="Ribosomal_L17"/>
    <property type="match status" value="1"/>
</dbReference>
<dbReference type="SUPFAM" id="SSF64263">
    <property type="entry name" value="Prokaryotic ribosomal protein L17"/>
    <property type="match status" value="1"/>
</dbReference>
<dbReference type="PROSITE" id="PS01167">
    <property type="entry name" value="RIBOSOMAL_L17"/>
    <property type="match status" value="1"/>
</dbReference>
<sequence length="197" mass="21486">MRHRKKGKKIGRTASHRKRTLQSLSNALIENKSITTTVAKAKALRPFVEPLITRAKEDTQHNRREVFRHLQSNDAIDELFGEVSERVGDRPGGYTRIIKLGQRSGDGAELALIELVDYNDVPPADTGQGGSGGTRRGSGKGRRTSTEEEQADASSSGDSSDEESESVEEDEATAEEASADAEQGEAEEEEESEEDNT</sequence>
<protein>
    <recommendedName>
        <fullName evidence="1">Large ribosomal subunit protein bL17</fullName>
    </recommendedName>
    <alternativeName>
        <fullName evidence="3">50S ribosomal protein L17</fullName>
    </alternativeName>
</protein>